<organism>
    <name type="scientific">Clostridium perfringens (strain 13 / Type A)</name>
    <dbReference type="NCBI Taxonomy" id="195102"/>
    <lineage>
        <taxon>Bacteria</taxon>
        <taxon>Bacillati</taxon>
        <taxon>Bacillota</taxon>
        <taxon>Clostridia</taxon>
        <taxon>Eubacteriales</taxon>
        <taxon>Clostridiaceae</taxon>
        <taxon>Clostridium</taxon>
    </lineage>
</organism>
<dbReference type="EMBL" id="BA000016">
    <property type="protein sequence ID" value="BAB80709.1"/>
    <property type="molecule type" value="Genomic_DNA"/>
</dbReference>
<dbReference type="RefSeq" id="WP_003448677.1">
    <property type="nucleotide sequence ID" value="NC_003366.1"/>
</dbReference>
<dbReference type="SMR" id="Q8XLN8"/>
<dbReference type="STRING" id="195102.gene:10490266"/>
<dbReference type="KEGG" id="cpe:CPE1003"/>
<dbReference type="HOGENOM" id="CLU_173137_3_2_9"/>
<dbReference type="Proteomes" id="UP000000818">
    <property type="component" value="Chromosome"/>
</dbReference>
<dbReference type="GO" id="GO:0005737">
    <property type="term" value="C:cytoplasm"/>
    <property type="evidence" value="ECO:0007669"/>
    <property type="project" value="UniProtKB-SubCell"/>
</dbReference>
<dbReference type="Gene3D" id="1.10.287.540">
    <property type="entry name" value="Helix hairpin bin"/>
    <property type="match status" value="1"/>
</dbReference>
<dbReference type="HAMAP" id="MF_01103">
    <property type="entry name" value="UPF0291"/>
    <property type="match status" value="1"/>
</dbReference>
<dbReference type="InterPro" id="IPR009242">
    <property type="entry name" value="DUF896"/>
</dbReference>
<dbReference type="PANTHER" id="PTHR37300">
    <property type="entry name" value="UPF0291 PROTEIN CBO2609/CLC_2481"/>
    <property type="match status" value="1"/>
</dbReference>
<dbReference type="PANTHER" id="PTHR37300:SF1">
    <property type="entry name" value="UPF0291 PROTEIN YNZC"/>
    <property type="match status" value="1"/>
</dbReference>
<dbReference type="Pfam" id="PF05979">
    <property type="entry name" value="DUF896"/>
    <property type="match status" value="1"/>
</dbReference>
<dbReference type="SUPFAM" id="SSF158221">
    <property type="entry name" value="YnzC-like"/>
    <property type="match status" value="1"/>
</dbReference>
<name>Y1003_CLOPE</name>
<reference key="1">
    <citation type="journal article" date="2002" name="Proc. Natl. Acad. Sci. U.S.A.">
        <title>Complete genome sequence of Clostridium perfringens, an anaerobic flesh-eater.</title>
        <authorList>
            <person name="Shimizu T."/>
            <person name="Ohtani K."/>
            <person name="Hirakawa H."/>
            <person name="Ohshima K."/>
            <person name="Yamashita A."/>
            <person name="Shiba T."/>
            <person name="Ogasawara N."/>
            <person name="Hattori M."/>
            <person name="Kuhara S."/>
            <person name="Hayashi H."/>
        </authorList>
    </citation>
    <scope>NUCLEOTIDE SEQUENCE [LARGE SCALE GENOMIC DNA]</scope>
    <source>
        <strain>13 / Type A</strain>
    </source>
</reference>
<feature type="chain" id="PRO_0000094967" description="UPF0291 protein CPE1003">
    <location>
        <begin position="1"/>
        <end position="59"/>
    </location>
</feature>
<feature type="region of interest" description="Disordered" evidence="2">
    <location>
        <begin position="1"/>
        <end position="30"/>
    </location>
</feature>
<accession>Q8XLN8</accession>
<comment type="subcellular location">
    <subcellularLocation>
        <location evidence="1">Cytoplasm</location>
    </subcellularLocation>
</comment>
<comment type="similarity">
    <text evidence="1">Belongs to the UPF0291 family.</text>
</comment>
<sequence length="59" mass="7272">MNIDELTKRINELHKKHKEEGLSEDEHKEREELRKEYINRFKSNLREQLKGIEPKNKKN</sequence>
<keyword id="KW-0963">Cytoplasm</keyword>
<keyword id="KW-1185">Reference proteome</keyword>
<proteinExistence type="inferred from homology"/>
<gene>
    <name type="ordered locus">CPE1003</name>
</gene>
<protein>
    <recommendedName>
        <fullName evidence="1">UPF0291 protein CPE1003</fullName>
    </recommendedName>
</protein>
<evidence type="ECO:0000255" key="1">
    <source>
        <dbReference type="HAMAP-Rule" id="MF_01103"/>
    </source>
</evidence>
<evidence type="ECO:0000256" key="2">
    <source>
        <dbReference type="SAM" id="MobiDB-lite"/>
    </source>
</evidence>